<name>SYE_BUCAI</name>
<sequence length="467" mass="54703">MKVKTRFAPSPTGNLHIGSIRTALYSWLFARHHNGKFVLRIEDTDLVRSELISIDSIFNGLKWLGLNWDEGPYFQTKRLDRYKEVINVMLEKEDAYICVCSCQELEEIRKKQIEKGNKPRYPGTCRNLNIKNISNQNHVIRFKNPLFGKVKFQDKIRGEIVFDNAELDDLVIQRSNGMPTYNFCVVVDDMDMKITHVIRGEDHISNTPRQINILNSLKVKIPVYAHLSMILDEKGNKISKRKNAINIIEYYENGFLPEALLNYIIRLGWSYGDKEIFNLSEMKELFNLKSITKSSSTVNFKKLLWMNKYYINNSPLDYVSDCLKNYMEKKNINVEKGPDLELLVKLFRSRHHTLKEITESCRYFYEEINFFNHTVIEKYFTRKNCFILQTCYKKIEKLSIWDNKNISKIINDVSELIKVTKKEISMILRISMTGDICSPSISTVILLIGKEKALLRINNVVNYIKNL</sequence>
<gene>
    <name evidence="1" type="primary">gltX</name>
    <name type="ordered locus">BU070</name>
</gene>
<feature type="chain" id="PRO_0000119526" description="Glutamate--tRNA ligase">
    <location>
        <begin position="1"/>
        <end position="467"/>
    </location>
</feature>
<feature type="short sequence motif" description="'HIGH' region" evidence="1">
    <location>
        <begin position="9"/>
        <end position="19"/>
    </location>
</feature>
<feature type="short sequence motif" description="'KMSKS' region" evidence="1">
    <location>
        <begin position="237"/>
        <end position="241"/>
    </location>
</feature>
<feature type="binding site" evidence="1">
    <location>
        <position position="240"/>
    </location>
    <ligand>
        <name>ATP</name>
        <dbReference type="ChEBI" id="CHEBI:30616"/>
    </ligand>
</feature>
<dbReference type="EC" id="6.1.1.17" evidence="1"/>
<dbReference type="EMBL" id="BA000003">
    <property type="protein sequence ID" value="BAB12791.1"/>
    <property type="molecule type" value="Genomic_DNA"/>
</dbReference>
<dbReference type="RefSeq" id="NP_239905.1">
    <property type="nucleotide sequence ID" value="NC_002528.1"/>
</dbReference>
<dbReference type="RefSeq" id="WP_010895925.1">
    <property type="nucleotide sequence ID" value="NC_002528.1"/>
</dbReference>
<dbReference type="SMR" id="P57173"/>
<dbReference type="STRING" id="563178.BUAP5A_069"/>
<dbReference type="EnsemblBacteria" id="BAB12791">
    <property type="protein sequence ID" value="BAB12791"/>
    <property type="gene ID" value="BAB12791"/>
</dbReference>
<dbReference type="KEGG" id="buc:BU070"/>
<dbReference type="PATRIC" id="fig|107806.10.peg.77"/>
<dbReference type="eggNOG" id="COG0008">
    <property type="taxonomic scope" value="Bacteria"/>
</dbReference>
<dbReference type="HOGENOM" id="CLU_015768_6_0_6"/>
<dbReference type="Proteomes" id="UP000001806">
    <property type="component" value="Chromosome"/>
</dbReference>
<dbReference type="GO" id="GO:0005829">
    <property type="term" value="C:cytosol"/>
    <property type="evidence" value="ECO:0007669"/>
    <property type="project" value="TreeGrafter"/>
</dbReference>
<dbReference type="GO" id="GO:0005524">
    <property type="term" value="F:ATP binding"/>
    <property type="evidence" value="ECO:0007669"/>
    <property type="project" value="UniProtKB-UniRule"/>
</dbReference>
<dbReference type="GO" id="GO:0004818">
    <property type="term" value="F:glutamate-tRNA ligase activity"/>
    <property type="evidence" value="ECO:0007669"/>
    <property type="project" value="UniProtKB-UniRule"/>
</dbReference>
<dbReference type="GO" id="GO:0000049">
    <property type="term" value="F:tRNA binding"/>
    <property type="evidence" value="ECO:0007669"/>
    <property type="project" value="InterPro"/>
</dbReference>
<dbReference type="GO" id="GO:0008270">
    <property type="term" value="F:zinc ion binding"/>
    <property type="evidence" value="ECO:0007669"/>
    <property type="project" value="InterPro"/>
</dbReference>
<dbReference type="GO" id="GO:0006424">
    <property type="term" value="P:glutamyl-tRNA aminoacylation"/>
    <property type="evidence" value="ECO:0007669"/>
    <property type="project" value="UniProtKB-UniRule"/>
</dbReference>
<dbReference type="CDD" id="cd00808">
    <property type="entry name" value="GluRS_core"/>
    <property type="match status" value="1"/>
</dbReference>
<dbReference type="FunFam" id="3.40.50.620:FF:000007">
    <property type="entry name" value="Glutamate--tRNA ligase"/>
    <property type="match status" value="1"/>
</dbReference>
<dbReference type="Gene3D" id="1.10.10.350">
    <property type="match status" value="1"/>
</dbReference>
<dbReference type="Gene3D" id="3.40.50.620">
    <property type="entry name" value="HUPs"/>
    <property type="match status" value="1"/>
</dbReference>
<dbReference type="HAMAP" id="MF_00022">
    <property type="entry name" value="Glu_tRNA_synth_type1"/>
    <property type="match status" value="1"/>
</dbReference>
<dbReference type="InterPro" id="IPR045462">
    <property type="entry name" value="aa-tRNA-synth_I_cd-bd"/>
</dbReference>
<dbReference type="InterPro" id="IPR020751">
    <property type="entry name" value="aa-tRNA-synth_I_codon-bd_sub2"/>
</dbReference>
<dbReference type="InterPro" id="IPR008925">
    <property type="entry name" value="aa_tRNA-synth_I_cd-bd_sf"/>
</dbReference>
<dbReference type="InterPro" id="IPR004527">
    <property type="entry name" value="Glu-tRNA-ligase_bac/mito"/>
</dbReference>
<dbReference type="InterPro" id="IPR000924">
    <property type="entry name" value="Glu/Gln-tRNA-synth"/>
</dbReference>
<dbReference type="InterPro" id="IPR020058">
    <property type="entry name" value="Glu/Gln-tRNA-synth_Ib_cat-dom"/>
</dbReference>
<dbReference type="InterPro" id="IPR049940">
    <property type="entry name" value="GluQ/Sye"/>
</dbReference>
<dbReference type="InterPro" id="IPR033910">
    <property type="entry name" value="GluRS_core"/>
</dbReference>
<dbReference type="InterPro" id="IPR014729">
    <property type="entry name" value="Rossmann-like_a/b/a_fold"/>
</dbReference>
<dbReference type="NCBIfam" id="TIGR00464">
    <property type="entry name" value="gltX_bact"/>
    <property type="match status" value="1"/>
</dbReference>
<dbReference type="PANTHER" id="PTHR43311">
    <property type="entry name" value="GLUTAMATE--TRNA LIGASE"/>
    <property type="match status" value="1"/>
</dbReference>
<dbReference type="PANTHER" id="PTHR43311:SF2">
    <property type="entry name" value="GLUTAMATE--TRNA LIGASE, MITOCHONDRIAL-RELATED"/>
    <property type="match status" value="1"/>
</dbReference>
<dbReference type="Pfam" id="PF19269">
    <property type="entry name" value="Anticodon_2"/>
    <property type="match status" value="1"/>
</dbReference>
<dbReference type="Pfam" id="PF00749">
    <property type="entry name" value="tRNA-synt_1c"/>
    <property type="match status" value="1"/>
</dbReference>
<dbReference type="PRINTS" id="PR00987">
    <property type="entry name" value="TRNASYNTHGLU"/>
</dbReference>
<dbReference type="SUPFAM" id="SSF48163">
    <property type="entry name" value="An anticodon-binding domain of class I aminoacyl-tRNA synthetases"/>
    <property type="match status" value="1"/>
</dbReference>
<dbReference type="SUPFAM" id="SSF52374">
    <property type="entry name" value="Nucleotidylyl transferase"/>
    <property type="match status" value="1"/>
</dbReference>
<accession>P57173</accession>
<reference key="1">
    <citation type="journal article" date="2000" name="Nature">
        <title>Genome sequence of the endocellular bacterial symbiont of aphids Buchnera sp. APS.</title>
        <authorList>
            <person name="Shigenobu S."/>
            <person name="Watanabe H."/>
            <person name="Hattori M."/>
            <person name="Sakaki Y."/>
            <person name="Ishikawa H."/>
        </authorList>
    </citation>
    <scope>NUCLEOTIDE SEQUENCE [LARGE SCALE GENOMIC DNA]</scope>
    <source>
        <strain>APS</strain>
    </source>
</reference>
<keyword id="KW-0030">Aminoacyl-tRNA synthetase</keyword>
<keyword id="KW-0067">ATP-binding</keyword>
<keyword id="KW-0963">Cytoplasm</keyword>
<keyword id="KW-0436">Ligase</keyword>
<keyword id="KW-0547">Nucleotide-binding</keyword>
<keyword id="KW-0648">Protein biosynthesis</keyword>
<keyword id="KW-1185">Reference proteome</keyword>
<proteinExistence type="inferred from homology"/>
<evidence type="ECO:0000255" key="1">
    <source>
        <dbReference type="HAMAP-Rule" id="MF_00022"/>
    </source>
</evidence>
<organism>
    <name type="scientific">Buchnera aphidicola subsp. Acyrthosiphon pisum (strain APS)</name>
    <name type="common">Acyrthosiphon pisum symbiotic bacterium</name>
    <dbReference type="NCBI Taxonomy" id="107806"/>
    <lineage>
        <taxon>Bacteria</taxon>
        <taxon>Pseudomonadati</taxon>
        <taxon>Pseudomonadota</taxon>
        <taxon>Gammaproteobacteria</taxon>
        <taxon>Enterobacterales</taxon>
        <taxon>Erwiniaceae</taxon>
        <taxon>Buchnera</taxon>
    </lineage>
</organism>
<comment type="function">
    <text evidence="1">Catalyzes the attachment of glutamate to tRNA(Glu) in a two-step reaction: glutamate is first activated by ATP to form Glu-AMP and then transferred to the acceptor end of tRNA(Glu).</text>
</comment>
<comment type="catalytic activity">
    <reaction evidence="1">
        <text>tRNA(Glu) + L-glutamate + ATP = L-glutamyl-tRNA(Glu) + AMP + diphosphate</text>
        <dbReference type="Rhea" id="RHEA:23540"/>
        <dbReference type="Rhea" id="RHEA-COMP:9663"/>
        <dbReference type="Rhea" id="RHEA-COMP:9680"/>
        <dbReference type="ChEBI" id="CHEBI:29985"/>
        <dbReference type="ChEBI" id="CHEBI:30616"/>
        <dbReference type="ChEBI" id="CHEBI:33019"/>
        <dbReference type="ChEBI" id="CHEBI:78442"/>
        <dbReference type="ChEBI" id="CHEBI:78520"/>
        <dbReference type="ChEBI" id="CHEBI:456215"/>
        <dbReference type="EC" id="6.1.1.17"/>
    </reaction>
</comment>
<comment type="subunit">
    <text evidence="1">Monomer.</text>
</comment>
<comment type="subcellular location">
    <subcellularLocation>
        <location evidence="1">Cytoplasm</location>
    </subcellularLocation>
</comment>
<comment type="similarity">
    <text evidence="1">Belongs to the class-I aminoacyl-tRNA synthetase family. Glutamate--tRNA ligase type 1 subfamily.</text>
</comment>
<protein>
    <recommendedName>
        <fullName evidence="1">Glutamate--tRNA ligase</fullName>
        <ecNumber evidence="1">6.1.1.17</ecNumber>
    </recommendedName>
    <alternativeName>
        <fullName evidence="1">Glutamyl-tRNA synthetase</fullName>
        <shortName evidence="1">GluRS</shortName>
    </alternativeName>
</protein>